<accession>Q01355</accession>
<accession>Q7RVF8</accession>
<organism>
    <name type="scientific">Neurospora crassa (strain ATCC 24698 / 74-OR23-1A / CBS 708.71 / DSM 1257 / FGSC 987)</name>
    <dbReference type="NCBI Taxonomy" id="367110"/>
    <lineage>
        <taxon>Eukaryota</taxon>
        <taxon>Fungi</taxon>
        <taxon>Dikarya</taxon>
        <taxon>Ascomycota</taxon>
        <taxon>Pezizomycotina</taxon>
        <taxon>Sordariomycetes</taxon>
        <taxon>Sordariomycetidae</taxon>
        <taxon>Sordariales</taxon>
        <taxon>Sordariaceae</taxon>
        <taxon>Neurospora</taxon>
    </lineage>
</organism>
<protein>
    <recommendedName>
        <fullName>Alternative oxidase, mitochondrial</fullName>
        <shortName>ALTOX</shortName>
        <ecNumber>1.-.-.-</ecNumber>
    </recommendedName>
</protein>
<comment type="function">
    <text>Catalyzes cyanide-resistant oxygen consumption. May increase respiration when the cytochrome respiratory pathway is restricted, or in response to low temperatures.</text>
</comment>
<comment type="cofactor">
    <cofactor evidence="1">
        <name>Fe cation</name>
        <dbReference type="ChEBI" id="CHEBI:24875"/>
    </cofactor>
    <text evidence="1">Binds 2 iron ions per subunit.</text>
</comment>
<comment type="subunit">
    <text evidence="4">Homodimer; disulfide-linked.</text>
</comment>
<comment type="subcellular location">
    <subcellularLocation>
        <location>Mitochondrion inner membrane</location>
        <topology>Multi-pass membrane protein</topology>
        <orientation>Matrix side</orientation>
    </subcellularLocation>
</comment>
<comment type="similarity">
    <text evidence="4">Belongs to the alternative oxidase family.</text>
</comment>
<name>AOX_NEUCR</name>
<evidence type="ECO:0000250" key="1">
    <source>
        <dbReference type="UniProtKB" id="Q26710"/>
    </source>
</evidence>
<evidence type="ECO:0000255" key="2"/>
<evidence type="ECO:0000269" key="3">
    <source>
    </source>
</evidence>
<evidence type="ECO:0000305" key="4"/>
<proteinExistence type="evidence at protein level"/>
<feature type="transit peptide" description="Mitochondrion" evidence="2">
    <location>
        <begin position="1"/>
        <end position="64"/>
    </location>
</feature>
<feature type="chain" id="PRO_0000001725" description="Alternative oxidase, mitochondrial">
    <location>
        <begin position="65"/>
        <end position="362"/>
    </location>
</feature>
<feature type="transmembrane region" description="Helical" evidence="2">
    <location>
        <begin position="156"/>
        <end position="176"/>
    </location>
</feature>
<feature type="transmembrane region" description="Helical" evidence="2">
    <location>
        <begin position="222"/>
        <end position="242"/>
    </location>
</feature>
<feature type="binding site" evidence="1">
    <location>
        <position position="163"/>
    </location>
    <ligand>
        <name>Fe cation</name>
        <dbReference type="ChEBI" id="CHEBI:24875"/>
        <label>1</label>
    </ligand>
</feature>
<feature type="binding site" evidence="1">
    <location>
        <position position="202"/>
    </location>
    <ligand>
        <name>Fe cation</name>
        <dbReference type="ChEBI" id="CHEBI:24875"/>
        <label>1</label>
    </ligand>
</feature>
<feature type="binding site" evidence="1">
    <location>
        <position position="202"/>
    </location>
    <ligand>
        <name>Fe cation</name>
        <dbReference type="ChEBI" id="CHEBI:24875"/>
        <label>2</label>
    </ligand>
</feature>
<feature type="binding site" evidence="1">
    <location>
        <position position="205"/>
    </location>
    <ligand>
        <name>Fe cation</name>
        <dbReference type="ChEBI" id="CHEBI:24875"/>
        <label>1</label>
    </ligand>
</feature>
<feature type="binding site" evidence="1">
    <location>
        <position position="253"/>
    </location>
    <ligand>
        <name>Fe cation</name>
        <dbReference type="ChEBI" id="CHEBI:24875"/>
        <label>2</label>
    </ligand>
</feature>
<feature type="binding site" evidence="1">
    <location>
        <position position="310"/>
    </location>
    <ligand>
        <name>Fe cation</name>
        <dbReference type="ChEBI" id="CHEBI:24875"/>
        <label>1</label>
    </ligand>
</feature>
<feature type="binding site" evidence="1">
    <location>
        <position position="310"/>
    </location>
    <ligand>
        <name>Fe cation</name>
        <dbReference type="ChEBI" id="CHEBI:24875"/>
        <label>2</label>
    </ligand>
</feature>
<feature type="binding site" evidence="1">
    <location>
        <position position="313"/>
    </location>
    <ligand>
        <name>Fe cation</name>
        <dbReference type="ChEBI" id="CHEBI:24875"/>
        <label>2</label>
    </ligand>
</feature>
<feature type="disulfide bond" description="Interchain" evidence="2">
    <location>
        <position position="119"/>
    </location>
</feature>
<feature type="mutagenesis site" description="In aod-1-1 and aod-1-2 mutants; alternative oxidase deficiency." evidence="3">
    <original>P</original>
    <variation>L</variation>
    <location>
        <position position="82"/>
    </location>
</feature>
<feature type="mutagenesis site" description="In aod-1-6 mutant; alternative oxidase deficiency." evidence="3">
    <original>A</original>
    <variation>D</variation>
    <location>
        <position position="173"/>
    </location>
</feature>
<feature type="sequence conflict" description="In Ref. 3; EAA32850." evidence="4" ref="3">
    <original>F</original>
    <variation>L</variation>
    <location>
        <position position="57"/>
    </location>
</feature>
<keyword id="KW-1015">Disulfide bond</keyword>
<keyword id="KW-0249">Electron transport</keyword>
<keyword id="KW-0408">Iron</keyword>
<keyword id="KW-0472">Membrane</keyword>
<keyword id="KW-0479">Metal-binding</keyword>
<keyword id="KW-0496">Mitochondrion</keyword>
<keyword id="KW-0999">Mitochondrion inner membrane</keyword>
<keyword id="KW-0560">Oxidoreductase</keyword>
<keyword id="KW-1185">Reference proteome</keyword>
<keyword id="KW-0679">Respiratory chain</keyword>
<keyword id="KW-0809">Transit peptide</keyword>
<keyword id="KW-0812">Transmembrane</keyword>
<keyword id="KW-1133">Transmembrane helix</keyword>
<keyword id="KW-0813">Transport</keyword>
<gene>
    <name type="primary">aod-1</name>
    <name type="ORF">NCU07953</name>
</gene>
<reference key="1">
    <citation type="journal article" date="1996" name="Genetics">
        <title>Cloning and analysis of the alternative oxidase gene of Neurospora crassa.</title>
        <authorList>
            <person name="Li Q."/>
            <person name="Ritzel R.G."/>
            <person name="McLean L.L.T."/>
            <person name="McIntosh L."/>
            <person name="Ko T."/>
            <person name="Bertrand H."/>
            <person name="Nargang F.E."/>
        </authorList>
    </citation>
    <scope>NUCLEOTIDE SEQUENCE [GENOMIC DNA]</scope>
    <scope>MUTAGENESIS OF PRO-82 AND ALA-173</scope>
    <source>
        <strain>NCN53 / FGSC 7595</strain>
    </source>
</reference>
<reference key="2">
    <citation type="journal article" date="2003" name="Fungal Genet. Biol.">
        <title>Alternative oxidase expression in Neurospora crassa.</title>
        <authorList>
            <person name="Tanton L.L."/>
            <person name="Nargang C.E."/>
            <person name="Kessler K.E."/>
            <person name="Li Q."/>
            <person name="Nargang F.E."/>
        </authorList>
    </citation>
    <scope>NUCLEOTIDE SEQUENCE [GENOMIC DNA]</scope>
    <source>
        <strain>su-1[mi-3]</strain>
    </source>
</reference>
<reference key="3">
    <citation type="journal article" date="2003" name="Nature">
        <title>The genome sequence of the filamentous fungus Neurospora crassa.</title>
        <authorList>
            <person name="Galagan J.E."/>
            <person name="Calvo S.E."/>
            <person name="Borkovich K.A."/>
            <person name="Selker E.U."/>
            <person name="Read N.D."/>
            <person name="Jaffe D.B."/>
            <person name="FitzHugh W."/>
            <person name="Ma L.-J."/>
            <person name="Smirnov S."/>
            <person name="Purcell S."/>
            <person name="Rehman B."/>
            <person name="Elkins T."/>
            <person name="Engels R."/>
            <person name="Wang S."/>
            <person name="Nielsen C.B."/>
            <person name="Butler J."/>
            <person name="Endrizzi M."/>
            <person name="Qui D."/>
            <person name="Ianakiev P."/>
            <person name="Bell-Pedersen D."/>
            <person name="Nelson M.A."/>
            <person name="Werner-Washburne M."/>
            <person name="Selitrennikoff C.P."/>
            <person name="Kinsey J.A."/>
            <person name="Braun E.L."/>
            <person name="Zelter A."/>
            <person name="Schulte U."/>
            <person name="Kothe G.O."/>
            <person name="Jedd G."/>
            <person name="Mewes H.-W."/>
            <person name="Staben C."/>
            <person name="Marcotte E."/>
            <person name="Greenberg D."/>
            <person name="Roy A."/>
            <person name="Foley K."/>
            <person name="Naylor J."/>
            <person name="Stange-Thomann N."/>
            <person name="Barrett R."/>
            <person name="Gnerre S."/>
            <person name="Kamal M."/>
            <person name="Kamvysselis M."/>
            <person name="Mauceli E.W."/>
            <person name="Bielke C."/>
            <person name="Rudd S."/>
            <person name="Frishman D."/>
            <person name="Krystofova S."/>
            <person name="Rasmussen C."/>
            <person name="Metzenberg R.L."/>
            <person name="Perkins D.D."/>
            <person name="Kroken S."/>
            <person name="Cogoni C."/>
            <person name="Macino G."/>
            <person name="Catcheside D.E.A."/>
            <person name="Li W."/>
            <person name="Pratt R.J."/>
            <person name="Osmani S.A."/>
            <person name="DeSouza C.P.C."/>
            <person name="Glass N.L."/>
            <person name="Orbach M.J."/>
            <person name="Berglund J.A."/>
            <person name="Voelker R."/>
            <person name="Yarden O."/>
            <person name="Plamann M."/>
            <person name="Seiler S."/>
            <person name="Dunlap J.C."/>
            <person name="Radford A."/>
            <person name="Aramayo R."/>
            <person name="Natvig D.O."/>
            <person name="Alex L.A."/>
            <person name="Mannhaupt G."/>
            <person name="Ebbole D.J."/>
            <person name="Freitag M."/>
            <person name="Paulsen I."/>
            <person name="Sachs M.S."/>
            <person name="Lander E.S."/>
            <person name="Nusbaum C."/>
            <person name="Birren B.W."/>
        </authorList>
    </citation>
    <scope>NUCLEOTIDE SEQUENCE [LARGE SCALE GENOMIC DNA]</scope>
    <source>
        <strain>ATCC 24698 / 74-OR23-1A / CBS 708.71 / DSM 1257 / FGSC 987</strain>
    </source>
</reference>
<reference key="4">
    <citation type="journal article" date="1999" name="FEBS Lett.">
        <title>A revised model of the active site of alternative oxidase.</title>
        <authorList>
            <person name="Andersson M.E."/>
            <person name="Nordlund P."/>
        </authorList>
    </citation>
    <scope>IRON-BINDING SITES</scope>
</reference>
<dbReference type="EC" id="1.-.-.-"/>
<dbReference type="EMBL" id="L46869">
    <property type="protein sequence ID" value="AAC37481.1"/>
    <property type="molecule type" value="Genomic_DNA"/>
</dbReference>
<dbReference type="EMBL" id="AY140653">
    <property type="protein sequence ID" value="AAN39882.1"/>
    <property type="molecule type" value="Genomic_DNA"/>
</dbReference>
<dbReference type="EMBL" id="CM002239">
    <property type="protein sequence ID" value="EAA32850.1"/>
    <property type="molecule type" value="Genomic_DNA"/>
</dbReference>
<dbReference type="PIR" id="S65752">
    <property type="entry name" value="S65752"/>
</dbReference>
<dbReference type="RefSeq" id="XP_962086.1">
    <property type="nucleotide sequence ID" value="XM_956993.2"/>
</dbReference>
<dbReference type="SMR" id="Q01355"/>
<dbReference type="STRING" id="367110.Q01355"/>
<dbReference type="PaxDb" id="5141-EFNCRP00000008199"/>
<dbReference type="EnsemblFungi" id="EAA32850">
    <property type="protein sequence ID" value="EAA32850"/>
    <property type="gene ID" value="NCU07953"/>
</dbReference>
<dbReference type="GeneID" id="3878251"/>
<dbReference type="KEGG" id="ncr:NCU07953"/>
<dbReference type="HOGENOM" id="CLU_041974_3_0_1"/>
<dbReference type="InParanoid" id="Q01355"/>
<dbReference type="OrthoDB" id="16906at2759"/>
<dbReference type="Proteomes" id="UP000001805">
    <property type="component" value="Chromosome 4, Linkage Group IV"/>
</dbReference>
<dbReference type="GO" id="GO:0005743">
    <property type="term" value="C:mitochondrial inner membrane"/>
    <property type="evidence" value="ECO:0007669"/>
    <property type="project" value="UniProtKB-SubCell"/>
</dbReference>
<dbReference type="GO" id="GO:0005739">
    <property type="term" value="C:mitochondrion"/>
    <property type="evidence" value="ECO:0000318"/>
    <property type="project" value="GO_Central"/>
</dbReference>
<dbReference type="GO" id="GO:0009916">
    <property type="term" value="F:alternative oxidase activity"/>
    <property type="evidence" value="ECO:0000318"/>
    <property type="project" value="GO_Central"/>
</dbReference>
<dbReference type="GO" id="GO:0046872">
    <property type="term" value="F:metal ion binding"/>
    <property type="evidence" value="ECO:0007669"/>
    <property type="project" value="UniProtKB-KW"/>
</dbReference>
<dbReference type="GO" id="GO:0010230">
    <property type="term" value="P:alternative respiration"/>
    <property type="evidence" value="ECO:0000318"/>
    <property type="project" value="GO_Central"/>
</dbReference>
<dbReference type="CDD" id="cd01053">
    <property type="entry name" value="AOX"/>
    <property type="match status" value="1"/>
</dbReference>
<dbReference type="FunFam" id="1.20.1260.140:FF:000002">
    <property type="entry name" value="Alternative oxidase"/>
    <property type="match status" value="1"/>
</dbReference>
<dbReference type="Gene3D" id="1.20.1260.140">
    <property type="entry name" value="Alternative oxidase"/>
    <property type="match status" value="1"/>
</dbReference>
<dbReference type="InterPro" id="IPR002680">
    <property type="entry name" value="AOX"/>
</dbReference>
<dbReference type="InterPro" id="IPR038659">
    <property type="entry name" value="AOX_sf"/>
</dbReference>
<dbReference type="PANTHER" id="PTHR31803">
    <property type="entry name" value="ALTERNATIVE OXIDASE"/>
    <property type="match status" value="1"/>
</dbReference>
<dbReference type="PANTHER" id="PTHR31803:SF3">
    <property type="entry name" value="ALTERNATIVE OXIDASE"/>
    <property type="match status" value="1"/>
</dbReference>
<dbReference type="Pfam" id="PF01786">
    <property type="entry name" value="AOX"/>
    <property type="match status" value="1"/>
</dbReference>
<dbReference type="PIRSF" id="PIRSF005229">
    <property type="entry name" value="AOX"/>
    <property type="match status" value="1"/>
</dbReference>
<sequence>MNTPKVNILHAPGQAAQLSRALISTCHTRPLLLAGSRVATSLHPTQTNLSSPSPRNFSTTSVTRLKDFFPAKETAYIRQTPPAWPHHGWTEEEMTSVVPEHRKPETVGDWLAWKLVRICRWATDIATGIRPEQQVDKHHPTTATSADKPLTEAQWLVRFIFLESIAGVPGMVAGMLRHLHSLRRLKRDNGWIETLLEESYNERMHLLTFMKMCEPGLLMKTLILGAQGVFFNAMFLSYLISPKITHRFVGYLEEEAVHTYTRCIREIEEGHLPKWSDEKFEIPEMAVRYWRMPEGKRTMKDLIHYIRADEAVHRGVNHTLSNLDQKEDPNPFVSDYKEGEGGRRPVNPALKPTGFERAEVIG</sequence>